<reference key="1">
    <citation type="journal article" date="1995" name="Virology">
        <title>Analysis of the complete nucleotide sequence of African swine fever virus.</title>
        <authorList>
            <person name="Yanez R.J."/>
            <person name="Rodriguez J.M."/>
            <person name="Nogal M.L."/>
            <person name="Yuste L."/>
            <person name="Enriquez C."/>
            <person name="Rodriguez J.F."/>
            <person name="Vinuela E."/>
        </authorList>
    </citation>
    <scope>NUCLEOTIDE SEQUENCE [LARGE SCALE GENOMIC DNA]</scope>
</reference>
<reference key="2">
    <citation type="journal article" date="2020" name="J. Virol.">
        <title>The African Swine Fever Virus Transcriptome.</title>
        <authorList>
            <person name="Cackett G."/>
            <person name="Matelska D."/>
            <person name="Sykora M."/>
            <person name="Portugal R."/>
            <person name="Malecki M."/>
            <person name="Baehler J."/>
            <person name="Dixon L."/>
            <person name="Werner F."/>
        </authorList>
    </citation>
    <scope>IDENTIFICATION</scope>
    <scope>INDUCTION</scope>
</reference>
<evidence type="ECO:0000269" key="1">
    <source>
    </source>
</evidence>
<evidence type="ECO:0000303" key="2">
    <source>
    </source>
</evidence>
<protein>
    <recommendedName>
        <fullName>Uncharacterized protein pNG2</fullName>
    </recommendedName>
</protein>
<organismHost>
    <name type="scientific">Ornithodoros</name>
    <name type="common">relapsing fever ticks</name>
    <dbReference type="NCBI Taxonomy" id="6937"/>
</organismHost>
<organismHost>
    <name type="scientific">Sus scrofa</name>
    <name type="common">Pig</name>
    <dbReference type="NCBI Taxonomy" id="9823"/>
</organismHost>
<comment type="induction">
    <text evidence="1">Expressed in the early phase of the viral replicative cycle.</text>
</comment>
<keyword id="KW-0244">Early protein</keyword>
<keyword id="KW-1185">Reference proteome</keyword>
<organism>
    <name type="scientific">African swine fever virus (strain Badajoz 1971 Vero-adapted)</name>
    <name type="common">Ba71V</name>
    <name type="synonym">ASFV</name>
    <dbReference type="NCBI Taxonomy" id="10498"/>
    <lineage>
        <taxon>Viruses</taxon>
        <taxon>Varidnaviria</taxon>
        <taxon>Bamfordvirae</taxon>
        <taxon>Nucleocytoviricota</taxon>
        <taxon>Pokkesviricetes</taxon>
        <taxon>Asfuvirales</taxon>
        <taxon>Asfarviridae</taxon>
        <taxon>Asfivirus</taxon>
        <taxon>African swine fever virus</taxon>
    </lineage>
</organism>
<dbReference type="EMBL" id="U18466">
    <property type="status" value="NOT_ANNOTATED_CDS"/>
    <property type="molecule type" value="Genomic_DNA"/>
</dbReference>
<dbReference type="SMR" id="P0DTH8"/>
<dbReference type="Proteomes" id="UP000000624">
    <property type="component" value="Segment"/>
</dbReference>
<accession>P0DTH8</accession>
<proteinExistence type="evidence at transcript level"/>
<name>PNG2_ASFB7</name>
<sequence length="50" mass="5827">MSGFMNSLRKCIGNINSHLEGFMRTYLLRIIRKIKPAAQLSIEDDHYKCL</sequence>
<feature type="chain" id="PRO_0000454435" description="Uncharacterized protein pNG2">
    <location>
        <begin position="1"/>
        <end position="50"/>
    </location>
</feature>
<gene>
    <name evidence="2" type="primary">pNG2</name>
</gene>